<accession>Q767L1</accession>
<feature type="chain" id="PRO_0000213892" description="Proline-rich protein 3">
    <location>
        <begin position="1" status="less than"/>
        <end position="131"/>
    </location>
</feature>
<feature type="zinc finger region" description="C3H1-type" evidence="1">
    <location>
        <begin position="98"/>
        <end position="126"/>
    </location>
</feature>
<feature type="region of interest" description="Disordered" evidence="2">
    <location>
        <begin position="1"/>
        <end position="77"/>
    </location>
</feature>
<feature type="compositionally biased region" description="Pro residues" evidence="2">
    <location>
        <begin position="12"/>
        <end position="25"/>
    </location>
</feature>
<feature type="compositionally biased region" description="Gly residues" evidence="2">
    <location>
        <begin position="28"/>
        <end position="44"/>
    </location>
</feature>
<feature type="non-terminal residue">
    <location>
        <position position="1"/>
    </location>
</feature>
<gene>
    <name type="primary">PRR3</name>
    <name type="synonym">CAT56</name>
</gene>
<keyword id="KW-0479">Metal-binding</keyword>
<keyword id="KW-1185">Reference proteome</keyword>
<keyword id="KW-0862">Zinc</keyword>
<keyword id="KW-0863">Zinc-finger</keyword>
<sequence>LHRGPPGSRGPMIPPLLSLPPPPRGRGPLRGGLGPRSGPYGRGWWGVNAEPPFPGPGHGGPSRGGFHKEQRNPRRLKSWSLIKNTCPPKDGPQVMEDKSDRPVCRHFAKKGHCRYEDLCAFYHPGANGPPL</sequence>
<evidence type="ECO:0000255" key="1">
    <source>
        <dbReference type="PROSITE-ProRule" id="PRU00723"/>
    </source>
</evidence>
<evidence type="ECO:0000256" key="2">
    <source>
        <dbReference type="SAM" id="MobiDB-lite"/>
    </source>
</evidence>
<reference key="1">
    <citation type="journal article" date="2004" name="Immunogenetics">
        <title>Nucleotide sequencing analysis of the swine 433-kb genomic segment located between the non-classical and classical SLA class I gene clusters.</title>
        <authorList>
            <person name="Shigenari A."/>
            <person name="Ando A."/>
            <person name="Renard C."/>
            <person name="Chardon P."/>
            <person name="Shiina T."/>
            <person name="Kulski J.K."/>
            <person name="Yasue H."/>
            <person name="Inoko H."/>
        </authorList>
    </citation>
    <scope>NUCLEOTIDE SEQUENCE [LARGE SCALE GENOMIC DNA]</scope>
    <source>
        <strain>Large white</strain>
    </source>
</reference>
<proteinExistence type="predicted"/>
<dbReference type="EMBL" id="AB113357">
    <property type="protein sequence ID" value="BAD08438.1"/>
    <property type="molecule type" value="Genomic_DNA"/>
</dbReference>
<dbReference type="SMR" id="Q767L1"/>
<dbReference type="STRING" id="9823.ENSSSCP00000029192"/>
<dbReference type="PaxDb" id="9823-ENSSSCP00000001450"/>
<dbReference type="eggNOG" id="ENOG502TAPB">
    <property type="taxonomic scope" value="Eukaryota"/>
</dbReference>
<dbReference type="HOGENOM" id="CLU_112270_0_0_1"/>
<dbReference type="InParanoid" id="Q767L1"/>
<dbReference type="Proteomes" id="UP000008227">
    <property type="component" value="Unplaced"/>
</dbReference>
<dbReference type="Proteomes" id="UP000314985">
    <property type="component" value="Unplaced"/>
</dbReference>
<dbReference type="Proteomes" id="UP000694570">
    <property type="component" value="Unplaced"/>
</dbReference>
<dbReference type="Proteomes" id="UP000694571">
    <property type="component" value="Unplaced"/>
</dbReference>
<dbReference type="Proteomes" id="UP000694720">
    <property type="component" value="Unplaced"/>
</dbReference>
<dbReference type="Proteomes" id="UP000694722">
    <property type="component" value="Unplaced"/>
</dbReference>
<dbReference type="Proteomes" id="UP000694723">
    <property type="component" value="Unplaced"/>
</dbReference>
<dbReference type="Proteomes" id="UP000694724">
    <property type="component" value="Unplaced"/>
</dbReference>
<dbReference type="Proteomes" id="UP000694725">
    <property type="component" value="Unplaced"/>
</dbReference>
<dbReference type="Proteomes" id="UP000694726">
    <property type="component" value="Unplaced"/>
</dbReference>
<dbReference type="Proteomes" id="UP000694727">
    <property type="component" value="Unplaced"/>
</dbReference>
<dbReference type="Proteomes" id="UP000694728">
    <property type="component" value="Unplaced"/>
</dbReference>
<dbReference type="GO" id="GO:0008270">
    <property type="term" value="F:zinc ion binding"/>
    <property type="evidence" value="ECO:0007669"/>
    <property type="project" value="UniProtKB-KW"/>
</dbReference>
<dbReference type="Gene3D" id="4.10.1000.10">
    <property type="entry name" value="Zinc finger, CCCH-type"/>
    <property type="match status" value="1"/>
</dbReference>
<dbReference type="InterPro" id="IPR042805">
    <property type="entry name" value="PRR3"/>
</dbReference>
<dbReference type="InterPro" id="IPR000571">
    <property type="entry name" value="Znf_CCCH"/>
</dbReference>
<dbReference type="InterPro" id="IPR036855">
    <property type="entry name" value="Znf_CCCH_sf"/>
</dbReference>
<dbReference type="PANTHER" id="PTHR47398">
    <property type="entry name" value="PROLINE-RICH PROTEIN 3"/>
    <property type="match status" value="1"/>
</dbReference>
<dbReference type="PANTHER" id="PTHR47398:SF1">
    <property type="entry name" value="PROLINE-RICH PROTEIN 3-RELATED"/>
    <property type="match status" value="1"/>
</dbReference>
<dbReference type="Pfam" id="PF00642">
    <property type="entry name" value="zf-CCCH"/>
    <property type="match status" value="1"/>
</dbReference>
<dbReference type="SMART" id="SM00356">
    <property type="entry name" value="ZnF_C3H1"/>
    <property type="match status" value="1"/>
</dbReference>
<dbReference type="SUPFAM" id="SSF90229">
    <property type="entry name" value="CCCH zinc finger"/>
    <property type="match status" value="1"/>
</dbReference>
<dbReference type="PROSITE" id="PS50103">
    <property type="entry name" value="ZF_C3H1"/>
    <property type="match status" value="1"/>
</dbReference>
<protein>
    <recommendedName>
        <fullName>Proline-rich protein 3</fullName>
    </recommendedName>
    <alternativeName>
        <fullName>MHC class I region proline-rich protein CAT56</fullName>
    </alternativeName>
</protein>
<organism>
    <name type="scientific">Sus scrofa</name>
    <name type="common">Pig</name>
    <dbReference type="NCBI Taxonomy" id="9823"/>
    <lineage>
        <taxon>Eukaryota</taxon>
        <taxon>Metazoa</taxon>
        <taxon>Chordata</taxon>
        <taxon>Craniata</taxon>
        <taxon>Vertebrata</taxon>
        <taxon>Euteleostomi</taxon>
        <taxon>Mammalia</taxon>
        <taxon>Eutheria</taxon>
        <taxon>Laurasiatheria</taxon>
        <taxon>Artiodactyla</taxon>
        <taxon>Suina</taxon>
        <taxon>Suidae</taxon>
        <taxon>Sus</taxon>
    </lineage>
</organism>
<name>PRR3_PIG</name>